<proteinExistence type="inferred from homology"/>
<evidence type="ECO:0000255" key="1">
    <source>
        <dbReference type="HAMAP-Rule" id="MF_01454"/>
    </source>
</evidence>
<evidence type="ECO:0000255" key="2">
    <source>
        <dbReference type="PROSITE-ProRule" id="PRU01231"/>
    </source>
</evidence>
<evidence type="ECO:0000256" key="3">
    <source>
        <dbReference type="SAM" id="MobiDB-lite"/>
    </source>
</evidence>
<organism>
    <name type="scientific">Yersinia pseudotuberculosis serotype I (strain IP32953)</name>
    <dbReference type="NCBI Taxonomy" id="273123"/>
    <lineage>
        <taxon>Bacteria</taxon>
        <taxon>Pseudomonadati</taxon>
        <taxon>Pseudomonadota</taxon>
        <taxon>Gammaproteobacteria</taxon>
        <taxon>Enterobacterales</taxon>
        <taxon>Yersiniaceae</taxon>
        <taxon>Yersinia</taxon>
    </lineage>
</organism>
<reference key="1">
    <citation type="journal article" date="2004" name="Proc. Natl. Acad. Sci. U.S.A.">
        <title>Insights into the evolution of Yersinia pestis through whole-genome comparison with Yersinia pseudotuberculosis.</title>
        <authorList>
            <person name="Chain P.S.G."/>
            <person name="Carniel E."/>
            <person name="Larimer F.W."/>
            <person name="Lamerdin J."/>
            <person name="Stoutland P.O."/>
            <person name="Regala W.M."/>
            <person name="Georgescu A.M."/>
            <person name="Vergez L.M."/>
            <person name="Land M.L."/>
            <person name="Motin V.L."/>
            <person name="Brubaker R.R."/>
            <person name="Fowler J."/>
            <person name="Hinnebusch J."/>
            <person name="Marceau M."/>
            <person name="Medigue C."/>
            <person name="Simonet M."/>
            <person name="Chenal-Francisque V."/>
            <person name="Souza B."/>
            <person name="Dacheux D."/>
            <person name="Elliott J.M."/>
            <person name="Derbise A."/>
            <person name="Hauser L.J."/>
            <person name="Garcia E."/>
        </authorList>
    </citation>
    <scope>NUCLEOTIDE SEQUENCE [LARGE SCALE GENOMIC DNA]</scope>
    <source>
        <strain>IP32953</strain>
    </source>
</reference>
<accession>Q66F73</accession>
<keyword id="KW-0963">Cytoplasm</keyword>
<keyword id="KW-0342">GTP-binding</keyword>
<keyword id="KW-0378">Hydrolase</keyword>
<keyword id="KW-0460">Magnesium</keyword>
<keyword id="KW-0479">Metal-binding</keyword>
<keyword id="KW-0547">Nucleotide-binding</keyword>
<name>OBG_YERPS</name>
<feature type="chain" id="PRO_0000386411" description="GTPase Obg">
    <location>
        <begin position="1"/>
        <end position="390"/>
    </location>
</feature>
<feature type="domain" description="Obg" evidence="2">
    <location>
        <begin position="1"/>
        <end position="159"/>
    </location>
</feature>
<feature type="domain" description="OBG-type G" evidence="1">
    <location>
        <begin position="160"/>
        <end position="333"/>
    </location>
</feature>
<feature type="region of interest" description="Disordered" evidence="3">
    <location>
        <begin position="364"/>
        <end position="390"/>
    </location>
</feature>
<feature type="compositionally biased region" description="Acidic residues" evidence="3">
    <location>
        <begin position="364"/>
        <end position="384"/>
    </location>
</feature>
<feature type="binding site" evidence="1">
    <location>
        <begin position="166"/>
        <end position="173"/>
    </location>
    <ligand>
        <name>GTP</name>
        <dbReference type="ChEBI" id="CHEBI:37565"/>
    </ligand>
</feature>
<feature type="binding site" evidence="1">
    <location>
        <position position="173"/>
    </location>
    <ligand>
        <name>Mg(2+)</name>
        <dbReference type="ChEBI" id="CHEBI:18420"/>
    </ligand>
</feature>
<feature type="binding site" evidence="1">
    <location>
        <begin position="191"/>
        <end position="195"/>
    </location>
    <ligand>
        <name>GTP</name>
        <dbReference type="ChEBI" id="CHEBI:37565"/>
    </ligand>
</feature>
<feature type="binding site" evidence="1">
    <location>
        <position position="193"/>
    </location>
    <ligand>
        <name>Mg(2+)</name>
        <dbReference type="ChEBI" id="CHEBI:18420"/>
    </ligand>
</feature>
<feature type="binding site" evidence="1">
    <location>
        <begin position="213"/>
        <end position="216"/>
    </location>
    <ligand>
        <name>GTP</name>
        <dbReference type="ChEBI" id="CHEBI:37565"/>
    </ligand>
</feature>
<feature type="binding site" evidence="1">
    <location>
        <begin position="283"/>
        <end position="286"/>
    </location>
    <ligand>
        <name>GTP</name>
        <dbReference type="ChEBI" id="CHEBI:37565"/>
    </ligand>
</feature>
<feature type="binding site" evidence="1">
    <location>
        <begin position="314"/>
        <end position="316"/>
    </location>
    <ligand>
        <name>GTP</name>
        <dbReference type="ChEBI" id="CHEBI:37565"/>
    </ligand>
</feature>
<protein>
    <recommendedName>
        <fullName evidence="1">GTPase Obg</fullName>
        <ecNumber evidence="1">3.6.5.-</ecNumber>
    </recommendedName>
    <alternativeName>
        <fullName evidence="1">GTP-binding protein Obg</fullName>
    </alternativeName>
</protein>
<sequence>MKFVDEAAILVVAGDGGNGCVSFRREKYIPNGGPDGGDGGDGGDIYLLADENLNTLIDYRFVKSFRAERGQNGQSRDCTGKRGKDITIKVPVGTRVLDQGTGEIVGDMVRHGQRLMVAKGGFHGLGNSRFKSSVNRAPRQKTMGTEGETRELMLELLLLADVGMLGLPNAGKSTFIRAVSAAKPKVADYPFTTLIPSLGVVRMDYEQSFVIADIPGLIEGASDGAGLGIRFLKHLERCRVLLHLVDLAPIDESDPAENAKVIVNELQQYSENLAEKPRWLVFNKIDLIDPEEAEKRAKAIVETLGWEGKYYMISAANRDNVNALCWDVMSFLNSQPKAMAIAESVPEKVEFMWDDYHREQLAEVEAEAEDDWDDDWDEEDDDGVEIIYER</sequence>
<comment type="function">
    <text evidence="1">An essential GTPase which binds GTP, GDP and possibly (p)ppGpp with moderate affinity, with high nucleotide exchange rates and a fairly low GTP hydrolysis rate. Plays a role in control of the cell cycle, stress response, ribosome biogenesis and in those bacteria that undergo differentiation, in morphogenesis control.</text>
</comment>
<comment type="cofactor">
    <cofactor evidence="1">
        <name>Mg(2+)</name>
        <dbReference type="ChEBI" id="CHEBI:18420"/>
    </cofactor>
</comment>
<comment type="subunit">
    <text evidence="1">Monomer.</text>
</comment>
<comment type="subcellular location">
    <subcellularLocation>
        <location evidence="1">Cytoplasm</location>
    </subcellularLocation>
</comment>
<comment type="similarity">
    <text evidence="1">Belongs to the TRAFAC class OBG-HflX-like GTPase superfamily. OBG GTPase family.</text>
</comment>
<gene>
    <name evidence="1" type="primary">obg</name>
    <name type="ordered locus">YPTB0467</name>
</gene>
<dbReference type="EC" id="3.6.5.-" evidence="1"/>
<dbReference type="EMBL" id="BX936398">
    <property type="protein sequence ID" value="CAH19707.1"/>
    <property type="molecule type" value="Genomic_DNA"/>
</dbReference>
<dbReference type="SMR" id="Q66F73"/>
<dbReference type="KEGG" id="ypo:BZ17_2098"/>
<dbReference type="KEGG" id="yps:YPTB0467"/>
<dbReference type="PATRIC" id="fig|273123.14.peg.2224"/>
<dbReference type="Proteomes" id="UP000001011">
    <property type="component" value="Chromosome"/>
</dbReference>
<dbReference type="GO" id="GO:0005737">
    <property type="term" value="C:cytoplasm"/>
    <property type="evidence" value="ECO:0007669"/>
    <property type="project" value="UniProtKB-SubCell"/>
</dbReference>
<dbReference type="GO" id="GO:0005525">
    <property type="term" value="F:GTP binding"/>
    <property type="evidence" value="ECO:0007669"/>
    <property type="project" value="UniProtKB-UniRule"/>
</dbReference>
<dbReference type="GO" id="GO:0003924">
    <property type="term" value="F:GTPase activity"/>
    <property type="evidence" value="ECO:0007669"/>
    <property type="project" value="UniProtKB-UniRule"/>
</dbReference>
<dbReference type="GO" id="GO:0000287">
    <property type="term" value="F:magnesium ion binding"/>
    <property type="evidence" value="ECO:0007669"/>
    <property type="project" value="InterPro"/>
</dbReference>
<dbReference type="GO" id="GO:0042254">
    <property type="term" value="P:ribosome biogenesis"/>
    <property type="evidence" value="ECO:0007669"/>
    <property type="project" value="UniProtKB-UniRule"/>
</dbReference>
<dbReference type="CDD" id="cd01898">
    <property type="entry name" value="Obg"/>
    <property type="match status" value="1"/>
</dbReference>
<dbReference type="FunFam" id="2.70.210.12:FF:000001">
    <property type="entry name" value="GTPase Obg"/>
    <property type="match status" value="1"/>
</dbReference>
<dbReference type="FunFam" id="3.40.50.300:FF:000185">
    <property type="entry name" value="GTPase Obg"/>
    <property type="match status" value="1"/>
</dbReference>
<dbReference type="Gene3D" id="2.70.210.12">
    <property type="entry name" value="GTP1/OBG domain"/>
    <property type="match status" value="1"/>
</dbReference>
<dbReference type="Gene3D" id="3.40.50.300">
    <property type="entry name" value="P-loop containing nucleotide triphosphate hydrolases"/>
    <property type="match status" value="1"/>
</dbReference>
<dbReference type="HAMAP" id="MF_01454">
    <property type="entry name" value="GTPase_Obg"/>
    <property type="match status" value="1"/>
</dbReference>
<dbReference type="InterPro" id="IPR031167">
    <property type="entry name" value="G_OBG"/>
</dbReference>
<dbReference type="InterPro" id="IPR006073">
    <property type="entry name" value="GTP-bd"/>
</dbReference>
<dbReference type="InterPro" id="IPR014100">
    <property type="entry name" value="GTP-bd_Obg/CgtA"/>
</dbReference>
<dbReference type="InterPro" id="IPR006074">
    <property type="entry name" value="GTP1-OBG_CS"/>
</dbReference>
<dbReference type="InterPro" id="IPR006169">
    <property type="entry name" value="GTP1_OBG_dom"/>
</dbReference>
<dbReference type="InterPro" id="IPR036726">
    <property type="entry name" value="GTP1_OBG_dom_sf"/>
</dbReference>
<dbReference type="InterPro" id="IPR045086">
    <property type="entry name" value="OBG_GTPase"/>
</dbReference>
<dbReference type="InterPro" id="IPR027417">
    <property type="entry name" value="P-loop_NTPase"/>
</dbReference>
<dbReference type="NCBIfam" id="TIGR02729">
    <property type="entry name" value="Obg_CgtA"/>
    <property type="match status" value="1"/>
</dbReference>
<dbReference type="NCBIfam" id="NF008955">
    <property type="entry name" value="PRK12297.1"/>
    <property type="match status" value="1"/>
</dbReference>
<dbReference type="NCBIfam" id="NF008956">
    <property type="entry name" value="PRK12299.1"/>
    <property type="match status" value="1"/>
</dbReference>
<dbReference type="PANTHER" id="PTHR11702">
    <property type="entry name" value="DEVELOPMENTALLY REGULATED GTP-BINDING PROTEIN-RELATED"/>
    <property type="match status" value="1"/>
</dbReference>
<dbReference type="PANTHER" id="PTHR11702:SF31">
    <property type="entry name" value="MITOCHONDRIAL RIBOSOME-ASSOCIATED GTPASE 2"/>
    <property type="match status" value="1"/>
</dbReference>
<dbReference type="Pfam" id="PF01018">
    <property type="entry name" value="GTP1_OBG"/>
    <property type="match status" value="1"/>
</dbReference>
<dbReference type="Pfam" id="PF01926">
    <property type="entry name" value="MMR_HSR1"/>
    <property type="match status" value="1"/>
</dbReference>
<dbReference type="PIRSF" id="PIRSF002401">
    <property type="entry name" value="GTP_bd_Obg/CgtA"/>
    <property type="match status" value="1"/>
</dbReference>
<dbReference type="PRINTS" id="PR00326">
    <property type="entry name" value="GTP1OBG"/>
</dbReference>
<dbReference type="SUPFAM" id="SSF82051">
    <property type="entry name" value="Obg GTP-binding protein N-terminal domain"/>
    <property type="match status" value="1"/>
</dbReference>
<dbReference type="SUPFAM" id="SSF52540">
    <property type="entry name" value="P-loop containing nucleoside triphosphate hydrolases"/>
    <property type="match status" value="1"/>
</dbReference>
<dbReference type="PROSITE" id="PS51710">
    <property type="entry name" value="G_OBG"/>
    <property type="match status" value="1"/>
</dbReference>
<dbReference type="PROSITE" id="PS00905">
    <property type="entry name" value="GTP1_OBG"/>
    <property type="match status" value="1"/>
</dbReference>
<dbReference type="PROSITE" id="PS51883">
    <property type="entry name" value="OBG"/>
    <property type="match status" value="1"/>
</dbReference>